<evidence type="ECO:0000255" key="1">
    <source>
        <dbReference type="HAMAP-Rule" id="MF_00415"/>
    </source>
</evidence>
<comment type="function">
    <text evidence="1">Assembles around the rod to form the L-ring and probably protects the motor/basal body from shearing forces during rotation.</text>
</comment>
<comment type="subunit">
    <text evidence="1">The basal body constitutes a major portion of the flagellar organelle and consists of four rings (L,P,S, and M) mounted on a central rod.</text>
</comment>
<comment type="subcellular location">
    <subcellularLocation>
        <location evidence="1">Cell outer membrane</location>
        <topology evidence="1">Lipid-anchor</topology>
    </subcellularLocation>
    <subcellularLocation>
        <location evidence="1">Bacterial flagellum basal body</location>
    </subcellularLocation>
</comment>
<comment type="similarity">
    <text evidence="1">Belongs to the FlgH family.</text>
</comment>
<gene>
    <name evidence="1" type="primary">flgH</name>
    <name type="ordered locus">Sama_2312</name>
</gene>
<proteinExistence type="inferred from homology"/>
<dbReference type="EMBL" id="CP000507">
    <property type="protein sequence ID" value="ABM00518.1"/>
    <property type="molecule type" value="Genomic_DNA"/>
</dbReference>
<dbReference type="RefSeq" id="WP_011760425.1">
    <property type="nucleotide sequence ID" value="NC_008700.1"/>
</dbReference>
<dbReference type="SMR" id="A1S811"/>
<dbReference type="STRING" id="326297.Sama_2312"/>
<dbReference type="KEGG" id="saz:Sama_2312"/>
<dbReference type="eggNOG" id="COG2063">
    <property type="taxonomic scope" value="Bacteria"/>
</dbReference>
<dbReference type="HOGENOM" id="CLU_069313_0_2_6"/>
<dbReference type="OrthoDB" id="9789463at2"/>
<dbReference type="Proteomes" id="UP000009175">
    <property type="component" value="Chromosome"/>
</dbReference>
<dbReference type="GO" id="GO:0009427">
    <property type="term" value="C:bacterial-type flagellum basal body, distal rod, L ring"/>
    <property type="evidence" value="ECO:0007669"/>
    <property type="project" value="InterPro"/>
</dbReference>
<dbReference type="GO" id="GO:0009279">
    <property type="term" value="C:cell outer membrane"/>
    <property type="evidence" value="ECO:0007669"/>
    <property type="project" value="UniProtKB-SubCell"/>
</dbReference>
<dbReference type="GO" id="GO:0003774">
    <property type="term" value="F:cytoskeletal motor activity"/>
    <property type="evidence" value="ECO:0007669"/>
    <property type="project" value="InterPro"/>
</dbReference>
<dbReference type="GO" id="GO:0071973">
    <property type="term" value="P:bacterial-type flagellum-dependent cell motility"/>
    <property type="evidence" value="ECO:0007669"/>
    <property type="project" value="InterPro"/>
</dbReference>
<dbReference type="HAMAP" id="MF_00415">
    <property type="entry name" value="FlgH"/>
    <property type="match status" value="1"/>
</dbReference>
<dbReference type="InterPro" id="IPR000527">
    <property type="entry name" value="Flag_Lring"/>
</dbReference>
<dbReference type="NCBIfam" id="NF001304">
    <property type="entry name" value="PRK00249.1-4"/>
    <property type="match status" value="1"/>
</dbReference>
<dbReference type="NCBIfam" id="NF009338">
    <property type="entry name" value="PRK12698.1"/>
    <property type="match status" value="1"/>
</dbReference>
<dbReference type="PANTHER" id="PTHR34933">
    <property type="entry name" value="FLAGELLAR L-RING PROTEIN"/>
    <property type="match status" value="1"/>
</dbReference>
<dbReference type="PANTHER" id="PTHR34933:SF1">
    <property type="entry name" value="FLAGELLAR L-RING PROTEIN"/>
    <property type="match status" value="1"/>
</dbReference>
<dbReference type="Pfam" id="PF02107">
    <property type="entry name" value="FlgH"/>
    <property type="match status" value="1"/>
</dbReference>
<dbReference type="PRINTS" id="PR01008">
    <property type="entry name" value="FLGLRINGFLGH"/>
</dbReference>
<dbReference type="PROSITE" id="PS51257">
    <property type="entry name" value="PROKAR_LIPOPROTEIN"/>
    <property type="match status" value="1"/>
</dbReference>
<keyword id="KW-0975">Bacterial flagellum</keyword>
<keyword id="KW-0998">Cell outer membrane</keyword>
<keyword id="KW-0449">Lipoprotein</keyword>
<keyword id="KW-0472">Membrane</keyword>
<keyword id="KW-0564">Palmitate</keyword>
<keyword id="KW-1185">Reference proteome</keyword>
<keyword id="KW-0732">Signal</keyword>
<protein>
    <recommendedName>
        <fullName evidence="1">Flagellar L-ring protein</fullName>
    </recommendedName>
    <alternativeName>
        <fullName evidence="1">Basal body L-ring protein</fullName>
    </alternativeName>
</protein>
<name>FLGH_SHEAM</name>
<sequence length="224" mass="24253">MLRYLMVGSLLVLAGCASTEHKPIPDDPYYAPVVPEEPPVALEPTGSIFLDSQAASLYTDIRAHRVGDIITVVLTESTQATKSANNEIKKGSDLNMDAIQALGGPVTISGNPLSLGYSDSMNTKREADADQSNSLRGNISAHVLQVLANGNLVIRGEKWISINNGDEFIRVTGVIRPQDITTDNTVVSTRVANARIQYSGTGTFANSQQVGWLSQFFLSDWWPF</sequence>
<organism>
    <name type="scientific">Shewanella amazonensis (strain ATCC BAA-1098 / SB2B)</name>
    <dbReference type="NCBI Taxonomy" id="326297"/>
    <lineage>
        <taxon>Bacteria</taxon>
        <taxon>Pseudomonadati</taxon>
        <taxon>Pseudomonadota</taxon>
        <taxon>Gammaproteobacteria</taxon>
        <taxon>Alteromonadales</taxon>
        <taxon>Shewanellaceae</taxon>
        <taxon>Shewanella</taxon>
    </lineage>
</organism>
<accession>A1S811</accession>
<reference key="1">
    <citation type="submission" date="2006-12" db="EMBL/GenBank/DDBJ databases">
        <title>Complete sequence of Shewanella amazonensis SB2B.</title>
        <authorList>
            <consortium name="US DOE Joint Genome Institute"/>
            <person name="Copeland A."/>
            <person name="Lucas S."/>
            <person name="Lapidus A."/>
            <person name="Barry K."/>
            <person name="Detter J.C."/>
            <person name="Glavina del Rio T."/>
            <person name="Hammon N."/>
            <person name="Israni S."/>
            <person name="Dalin E."/>
            <person name="Tice H."/>
            <person name="Pitluck S."/>
            <person name="Munk A.C."/>
            <person name="Brettin T."/>
            <person name="Bruce D."/>
            <person name="Han C."/>
            <person name="Tapia R."/>
            <person name="Gilna P."/>
            <person name="Schmutz J."/>
            <person name="Larimer F."/>
            <person name="Land M."/>
            <person name="Hauser L."/>
            <person name="Kyrpides N."/>
            <person name="Mikhailova N."/>
            <person name="Fredrickson J."/>
            <person name="Richardson P."/>
        </authorList>
    </citation>
    <scope>NUCLEOTIDE SEQUENCE [LARGE SCALE GENOMIC DNA]</scope>
    <source>
        <strain>ATCC BAA-1098 / SB2B</strain>
    </source>
</reference>
<feature type="signal peptide" evidence="1">
    <location>
        <begin position="1"/>
        <end position="15"/>
    </location>
</feature>
<feature type="chain" id="PRO_1000050097" description="Flagellar L-ring protein">
    <location>
        <begin position="16"/>
        <end position="224"/>
    </location>
</feature>
<feature type="lipid moiety-binding region" description="N-palmitoyl cysteine" evidence="1">
    <location>
        <position position="16"/>
    </location>
</feature>
<feature type="lipid moiety-binding region" description="S-diacylglycerol cysteine" evidence="1">
    <location>
        <position position="16"/>
    </location>
</feature>